<evidence type="ECO:0000255" key="1">
    <source>
        <dbReference type="HAMAP-Rule" id="MF_00707"/>
    </source>
</evidence>
<gene>
    <name type="ordered locus">SSP1116</name>
</gene>
<reference key="1">
    <citation type="journal article" date="2005" name="Proc. Natl. Acad. Sci. U.S.A.">
        <title>Whole genome sequence of Staphylococcus saprophyticus reveals the pathogenesis of uncomplicated urinary tract infection.</title>
        <authorList>
            <person name="Kuroda M."/>
            <person name="Yamashita A."/>
            <person name="Hirakawa H."/>
            <person name="Kumano M."/>
            <person name="Morikawa K."/>
            <person name="Higashide M."/>
            <person name="Maruyama A."/>
            <person name="Inose Y."/>
            <person name="Matoba K."/>
            <person name="Toh H."/>
            <person name="Kuhara S."/>
            <person name="Hattori M."/>
            <person name="Ohta T."/>
        </authorList>
    </citation>
    <scope>NUCLEOTIDE SEQUENCE [LARGE SCALE GENOMIC DNA]</scope>
    <source>
        <strain>ATCC 15305 / DSM 20229 / NCIMB 8711 / NCTC 7292 / S-41</strain>
    </source>
</reference>
<comment type="similarity">
    <text evidence="1">Belongs to the UPF0735 family.</text>
</comment>
<protein>
    <recommendedName>
        <fullName evidence="1">UPF0735 ACT domain-containing protein SSP1116</fullName>
    </recommendedName>
</protein>
<feature type="chain" id="PRO_0000225654" description="UPF0735 ACT domain-containing protein SSP1116">
    <location>
        <begin position="1"/>
        <end position="151"/>
    </location>
</feature>
<feature type="domain" description="ACT" evidence="1">
    <location>
        <begin position="74"/>
        <end position="149"/>
    </location>
</feature>
<name>Y1116_STAS1</name>
<accession>Q49Y81</accession>
<dbReference type="EMBL" id="AP008934">
    <property type="protein sequence ID" value="BAE18261.1"/>
    <property type="molecule type" value="Genomic_DNA"/>
</dbReference>
<dbReference type="RefSeq" id="WP_011302947.1">
    <property type="nucleotide sequence ID" value="NZ_MTGA01000038.1"/>
</dbReference>
<dbReference type="GeneID" id="3614958"/>
<dbReference type="KEGG" id="ssp:SSP1116"/>
<dbReference type="PATRIC" id="fig|342451.11.peg.1115"/>
<dbReference type="eggNOG" id="COG4492">
    <property type="taxonomic scope" value="Bacteria"/>
</dbReference>
<dbReference type="HOGENOM" id="CLU_128147_0_0_9"/>
<dbReference type="OrthoDB" id="9788773at2"/>
<dbReference type="Proteomes" id="UP000006371">
    <property type="component" value="Chromosome"/>
</dbReference>
<dbReference type="Gene3D" id="3.30.70.260">
    <property type="match status" value="1"/>
</dbReference>
<dbReference type="HAMAP" id="MF_00707">
    <property type="entry name" value="UPF0735"/>
    <property type="match status" value="1"/>
</dbReference>
<dbReference type="InterPro" id="IPR045865">
    <property type="entry name" value="ACT-like_dom_sf"/>
</dbReference>
<dbReference type="InterPro" id="IPR002912">
    <property type="entry name" value="ACT_dom"/>
</dbReference>
<dbReference type="InterPro" id="IPR008310">
    <property type="entry name" value="UPF0735_ACT_dom-cont"/>
</dbReference>
<dbReference type="NCBIfam" id="NF003361">
    <property type="entry name" value="PRK04435.1"/>
    <property type="match status" value="1"/>
</dbReference>
<dbReference type="PIRSF" id="PIRSF025624">
    <property type="entry name" value="ACT_PheB"/>
    <property type="match status" value="1"/>
</dbReference>
<dbReference type="SUPFAM" id="SSF55021">
    <property type="entry name" value="ACT-like"/>
    <property type="match status" value="1"/>
</dbReference>
<dbReference type="PROSITE" id="PS51671">
    <property type="entry name" value="ACT"/>
    <property type="match status" value="1"/>
</dbReference>
<organism>
    <name type="scientific">Staphylococcus saprophyticus subsp. saprophyticus (strain ATCC 15305 / DSM 20229 / NCIMB 8711 / NCTC 7292 / S-41)</name>
    <dbReference type="NCBI Taxonomy" id="342451"/>
    <lineage>
        <taxon>Bacteria</taxon>
        <taxon>Bacillati</taxon>
        <taxon>Bacillota</taxon>
        <taxon>Bacilli</taxon>
        <taxon>Bacillales</taxon>
        <taxon>Staphylococcaceae</taxon>
        <taxon>Staphylococcus</taxon>
    </lineage>
</organism>
<sequence length="151" mass="17319">MDKKDYKKFYLIREDVLPESVVKTLKIKEVLKNDPSLSIFEAVKQFDLSRSAFYKYRDTIFPIDEKIESTREFTLILYVNDIVGMLAEVLNTLSNLDLSILTIHQSIPMEGRATITLSLDATSTDLEIDDVMEALRIVDHVSKVELISMTI</sequence>
<keyword id="KW-1185">Reference proteome</keyword>
<proteinExistence type="inferred from homology"/>